<sequence>MRTERSIELFARAREYIPGGVNSPVRAFKAVGNNPLFIKEGHGSKIYDVDGNEYIDYVCSWGPLILGHSHPQVVQAICEAAEKGSSFGAPCEQEIELAQLICEAIPSVEKVRMVNSGTEATMSAVRLARAFTGRNHIVKFEGCYHGHADHFLIQAGSGLLTAGVPTSPGVPEAFARHTLVARYNDLDSVERLFAQAPADIAAVIVEPVAGNMGLVLPEPGFLEGLRQITKRYGALLIFDEVISGFRFCFGGYQNIVNIEPDLTTLGKIIGGGLPVGAYGGKKEIMERIAPEGDVYQAGTLSGNPLAMAAGSATLKILRAGKCYELLESTAASLCGQLNQILAQHDGLLSMNRVASLFSLFFTGDKVRDYSSVMRSDTGKYASFHQQLLQGGVYFPPSQFEVCFISAAHDEGDVEKTLKTIDKALQQTMVEQ</sequence>
<name>GSA_SYNWW</name>
<organism>
    <name type="scientific">Syntrophomonas wolfei subsp. wolfei (strain DSM 2245B / Goettingen)</name>
    <dbReference type="NCBI Taxonomy" id="335541"/>
    <lineage>
        <taxon>Bacteria</taxon>
        <taxon>Bacillati</taxon>
        <taxon>Bacillota</taxon>
        <taxon>Clostridia</taxon>
        <taxon>Eubacteriales</taxon>
        <taxon>Syntrophomonadaceae</taxon>
        <taxon>Syntrophomonas</taxon>
    </lineage>
</organism>
<gene>
    <name evidence="1" type="primary">hemL</name>
    <name type="ordered locus">Swol_0694</name>
</gene>
<dbReference type="EC" id="5.4.3.8" evidence="1"/>
<dbReference type="EMBL" id="CP000448">
    <property type="protein sequence ID" value="ABI68018.1"/>
    <property type="molecule type" value="Genomic_DNA"/>
</dbReference>
<dbReference type="RefSeq" id="WP_011640123.1">
    <property type="nucleotide sequence ID" value="NC_008346.1"/>
</dbReference>
<dbReference type="SMR" id="Q0AZ36"/>
<dbReference type="STRING" id="335541.Swol_0694"/>
<dbReference type="KEGG" id="swo:Swol_0694"/>
<dbReference type="eggNOG" id="COG0001">
    <property type="taxonomic scope" value="Bacteria"/>
</dbReference>
<dbReference type="HOGENOM" id="CLU_016922_1_5_9"/>
<dbReference type="OrthoDB" id="9807885at2"/>
<dbReference type="UniPathway" id="UPA00251">
    <property type="reaction ID" value="UER00317"/>
</dbReference>
<dbReference type="Proteomes" id="UP000001968">
    <property type="component" value="Chromosome"/>
</dbReference>
<dbReference type="GO" id="GO:0005737">
    <property type="term" value="C:cytoplasm"/>
    <property type="evidence" value="ECO:0007669"/>
    <property type="project" value="UniProtKB-SubCell"/>
</dbReference>
<dbReference type="GO" id="GO:0042286">
    <property type="term" value="F:glutamate-1-semialdehyde 2,1-aminomutase activity"/>
    <property type="evidence" value="ECO:0007669"/>
    <property type="project" value="UniProtKB-UniRule"/>
</dbReference>
<dbReference type="GO" id="GO:0030170">
    <property type="term" value="F:pyridoxal phosphate binding"/>
    <property type="evidence" value="ECO:0007669"/>
    <property type="project" value="InterPro"/>
</dbReference>
<dbReference type="GO" id="GO:0008483">
    <property type="term" value="F:transaminase activity"/>
    <property type="evidence" value="ECO:0007669"/>
    <property type="project" value="InterPro"/>
</dbReference>
<dbReference type="GO" id="GO:0006782">
    <property type="term" value="P:protoporphyrinogen IX biosynthetic process"/>
    <property type="evidence" value="ECO:0007669"/>
    <property type="project" value="UniProtKB-UniRule"/>
</dbReference>
<dbReference type="CDD" id="cd00610">
    <property type="entry name" value="OAT_like"/>
    <property type="match status" value="1"/>
</dbReference>
<dbReference type="FunFam" id="3.40.640.10:FF:000021">
    <property type="entry name" value="Glutamate-1-semialdehyde 2,1-aminomutase"/>
    <property type="match status" value="1"/>
</dbReference>
<dbReference type="Gene3D" id="3.90.1150.10">
    <property type="entry name" value="Aspartate Aminotransferase, domain 1"/>
    <property type="match status" value="1"/>
</dbReference>
<dbReference type="Gene3D" id="3.40.640.10">
    <property type="entry name" value="Type I PLP-dependent aspartate aminotransferase-like (Major domain)"/>
    <property type="match status" value="1"/>
</dbReference>
<dbReference type="HAMAP" id="MF_00375">
    <property type="entry name" value="HemL_aminotrans_3"/>
    <property type="match status" value="1"/>
</dbReference>
<dbReference type="InterPro" id="IPR004639">
    <property type="entry name" value="4pyrrol_synth_GluAld_NH2Trfase"/>
</dbReference>
<dbReference type="InterPro" id="IPR005814">
    <property type="entry name" value="Aminotrans_3"/>
</dbReference>
<dbReference type="InterPro" id="IPR015424">
    <property type="entry name" value="PyrdxlP-dep_Trfase"/>
</dbReference>
<dbReference type="InterPro" id="IPR015421">
    <property type="entry name" value="PyrdxlP-dep_Trfase_major"/>
</dbReference>
<dbReference type="InterPro" id="IPR015422">
    <property type="entry name" value="PyrdxlP-dep_Trfase_small"/>
</dbReference>
<dbReference type="NCBIfam" id="TIGR00713">
    <property type="entry name" value="hemL"/>
    <property type="match status" value="1"/>
</dbReference>
<dbReference type="NCBIfam" id="NF000818">
    <property type="entry name" value="PRK00062.1"/>
    <property type="match status" value="1"/>
</dbReference>
<dbReference type="PANTHER" id="PTHR43713">
    <property type="entry name" value="GLUTAMATE-1-SEMIALDEHYDE 2,1-AMINOMUTASE"/>
    <property type="match status" value="1"/>
</dbReference>
<dbReference type="PANTHER" id="PTHR43713:SF3">
    <property type="entry name" value="GLUTAMATE-1-SEMIALDEHYDE 2,1-AMINOMUTASE 1, CHLOROPLASTIC-RELATED"/>
    <property type="match status" value="1"/>
</dbReference>
<dbReference type="Pfam" id="PF00202">
    <property type="entry name" value="Aminotran_3"/>
    <property type="match status" value="1"/>
</dbReference>
<dbReference type="SUPFAM" id="SSF53383">
    <property type="entry name" value="PLP-dependent transferases"/>
    <property type="match status" value="1"/>
</dbReference>
<proteinExistence type="inferred from homology"/>
<protein>
    <recommendedName>
        <fullName evidence="1">Glutamate-1-semialdehyde 2,1-aminomutase</fullName>
        <shortName evidence="1">GSA</shortName>
        <ecNumber evidence="1">5.4.3.8</ecNumber>
    </recommendedName>
    <alternativeName>
        <fullName evidence="1">Glutamate-1-semialdehyde aminotransferase</fullName>
        <shortName evidence="1">GSA-AT</shortName>
    </alternativeName>
</protein>
<comment type="catalytic activity">
    <reaction evidence="1">
        <text>(S)-4-amino-5-oxopentanoate = 5-aminolevulinate</text>
        <dbReference type="Rhea" id="RHEA:14265"/>
        <dbReference type="ChEBI" id="CHEBI:57501"/>
        <dbReference type="ChEBI" id="CHEBI:356416"/>
        <dbReference type="EC" id="5.4.3.8"/>
    </reaction>
</comment>
<comment type="cofactor">
    <cofactor evidence="1">
        <name>pyridoxal 5'-phosphate</name>
        <dbReference type="ChEBI" id="CHEBI:597326"/>
    </cofactor>
</comment>
<comment type="pathway">
    <text evidence="1">Porphyrin-containing compound metabolism; protoporphyrin-IX biosynthesis; 5-aminolevulinate from L-glutamyl-tRNA(Glu): step 2/2.</text>
</comment>
<comment type="subunit">
    <text evidence="1">Homodimer.</text>
</comment>
<comment type="subcellular location">
    <subcellularLocation>
        <location evidence="1">Cytoplasm</location>
    </subcellularLocation>
</comment>
<comment type="similarity">
    <text evidence="1">Belongs to the class-III pyridoxal-phosphate-dependent aminotransferase family. HemL subfamily.</text>
</comment>
<evidence type="ECO:0000255" key="1">
    <source>
        <dbReference type="HAMAP-Rule" id="MF_00375"/>
    </source>
</evidence>
<accession>Q0AZ36</accession>
<keyword id="KW-0963">Cytoplasm</keyword>
<keyword id="KW-0413">Isomerase</keyword>
<keyword id="KW-0627">Porphyrin biosynthesis</keyword>
<keyword id="KW-0663">Pyridoxal phosphate</keyword>
<keyword id="KW-1185">Reference proteome</keyword>
<feature type="chain" id="PRO_0000300955" description="Glutamate-1-semialdehyde 2,1-aminomutase">
    <location>
        <begin position="1"/>
        <end position="431"/>
    </location>
</feature>
<feature type="modified residue" description="N6-(pyridoxal phosphate)lysine" evidence="1">
    <location>
        <position position="267"/>
    </location>
</feature>
<reference key="1">
    <citation type="journal article" date="2010" name="Environ. Microbiol.">
        <title>The genome of Syntrophomonas wolfei: new insights into syntrophic metabolism and biohydrogen production.</title>
        <authorList>
            <person name="Sieber J.R."/>
            <person name="Sims D.R."/>
            <person name="Han C."/>
            <person name="Kim E."/>
            <person name="Lykidis A."/>
            <person name="Lapidus A.L."/>
            <person name="McDonnald E."/>
            <person name="Rohlin L."/>
            <person name="Culley D.E."/>
            <person name="Gunsalus R."/>
            <person name="McInerney M.J."/>
        </authorList>
    </citation>
    <scope>NUCLEOTIDE SEQUENCE [LARGE SCALE GENOMIC DNA]</scope>
    <source>
        <strain>DSM 2245B / Goettingen</strain>
    </source>
</reference>